<protein>
    <recommendedName>
        <fullName>Taste receptor type 2 member 38</fullName>
        <shortName>T2R38</shortName>
    </recommendedName>
</protein>
<feature type="chain" id="PRO_0000082275" description="Taste receptor type 2 member 38">
    <location>
        <begin position="1"/>
        <end position="333"/>
    </location>
</feature>
<feature type="topological domain" description="Extracellular" evidence="2">
    <location>
        <begin position="1"/>
        <end position="17"/>
    </location>
</feature>
<feature type="transmembrane region" description="Helical; Name=1" evidence="2">
    <location>
        <begin position="18"/>
        <end position="38"/>
    </location>
</feature>
<feature type="topological domain" description="Cytoplasmic" evidence="2">
    <location>
        <begin position="39"/>
        <end position="55"/>
    </location>
</feature>
<feature type="transmembrane region" description="Helical; Name=2" evidence="2">
    <location>
        <begin position="56"/>
        <end position="76"/>
    </location>
</feature>
<feature type="topological domain" description="Extracellular" evidence="2">
    <location>
        <begin position="77"/>
        <end position="94"/>
    </location>
</feature>
<feature type="transmembrane region" description="Helical; Name=3" evidence="2">
    <location>
        <begin position="95"/>
        <end position="115"/>
    </location>
</feature>
<feature type="topological domain" description="Cytoplasmic" evidence="2">
    <location>
        <begin position="116"/>
        <end position="142"/>
    </location>
</feature>
<feature type="transmembrane region" description="Helical; Name=4" evidence="2">
    <location>
        <begin position="143"/>
        <end position="163"/>
    </location>
</feature>
<feature type="topological domain" description="Extracellular" evidence="2">
    <location>
        <begin position="164"/>
        <end position="190"/>
    </location>
</feature>
<feature type="transmembrane region" description="Helical; Name=5" evidence="2">
    <location>
        <begin position="191"/>
        <end position="211"/>
    </location>
</feature>
<feature type="topological domain" description="Cytoplasmic" evidence="2">
    <location>
        <begin position="212"/>
        <end position="251"/>
    </location>
</feature>
<feature type="transmembrane region" description="Helical; Name=6" evidence="2">
    <location>
        <begin position="252"/>
        <end position="272"/>
    </location>
</feature>
<feature type="topological domain" description="Extracellular" evidence="2">
    <location>
        <begin position="273"/>
        <end position="276"/>
    </location>
</feature>
<feature type="transmembrane region" description="Helical; Name=7" evidence="2">
    <location>
        <begin position="277"/>
        <end position="297"/>
    </location>
</feature>
<feature type="topological domain" description="Cytoplasmic" evidence="2">
    <location>
        <begin position="298"/>
        <end position="333"/>
    </location>
</feature>
<feature type="glycosylation site" description="N-linked (GlcNAc...) asparagine" evidence="2">
    <location>
        <position position="178"/>
    </location>
</feature>
<sequence length="333" mass="37857">MLTLTRIHTVSYEVRSTFLFISVLEFAVGFLTNAFVFLVNFWDVVKRQPLSNSDCVLLCLSISRLFLHGLLFLSAIQLTHFQKLSEPLNHSYQAINMLWMIANQANLWLAACLSLLYCSKLIRFSHTFLICLASWVSRKISQMLLGIILCSCICTVLCVWCFFSRPHFTVTTVLFMNNNTRLNWQIKDLNLFYSFLFCYLWSVPPFLLFLVSSGMLTVSLGRHMRTMKVYTRDSRDPSLEAHIKALKSLVSFFCFFVISSCAAFISVPLLILWRDKIGVMVCVGIMAACPSGHAAVLISGNAKLRRAVTTILLWAQSSLKVRADHKADSRTLC</sequence>
<comment type="function">
    <text evidence="1">Receptor that may play a role in the perception of bitterness and is gustducin-linked. May play a role in sensing the chemical composition of the gastrointestinal content. The activity of this receptor may stimulate alpha gustducin, mediate PLC-beta-2 activation and lead to the gating of TRPM5 (By similarity).</text>
</comment>
<comment type="subcellular location">
    <subcellularLocation>
        <location>Membrane</location>
        <topology>Multi-pass membrane protein</topology>
    </subcellularLocation>
</comment>
<comment type="miscellaneous">
    <text>Most taste cells may be activated by a limited number of bitter compounds; individual taste cells can discriminate among bitter stimuli.</text>
</comment>
<comment type="similarity">
    <text evidence="3">Belongs to the G-protein coupled receptor T2R family.</text>
</comment>
<evidence type="ECO:0000250" key="1"/>
<evidence type="ECO:0000255" key="2"/>
<evidence type="ECO:0000305" key="3"/>
<organism>
    <name type="scientific">Pan paniscus</name>
    <name type="common">Pygmy chimpanzee</name>
    <name type="synonym">Bonobo</name>
    <dbReference type="NCBI Taxonomy" id="9597"/>
    <lineage>
        <taxon>Eukaryota</taxon>
        <taxon>Metazoa</taxon>
        <taxon>Chordata</taxon>
        <taxon>Craniata</taxon>
        <taxon>Vertebrata</taxon>
        <taxon>Euteleostomi</taxon>
        <taxon>Mammalia</taxon>
        <taxon>Eutheria</taxon>
        <taxon>Euarchontoglires</taxon>
        <taxon>Primates</taxon>
        <taxon>Haplorrhini</taxon>
        <taxon>Catarrhini</taxon>
        <taxon>Hominidae</taxon>
        <taxon>Pan</taxon>
    </lineage>
</organism>
<accession>Q697L6</accession>
<accession>Q646C9</accession>
<dbReference type="EMBL" id="AY566401">
    <property type="protein sequence ID" value="AAS67621.1"/>
    <property type="molecule type" value="Genomic_DNA"/>
</dbReference>
<dbReference type="EMBL" id="AY724867">
    <property type="protein sequence ID" value="AAU21090.1"/>
    <property type="molecule type" value="Genomic_DNA"/>
</dbReference>
<dbReference type="EMBL" id="AY677143">
    <property type="protein sequence ID" value="AAV28571.1"/>
    <property type="molecule type" value="Genomic_DNA"/>
</dbReference>
<dbReference type="RefSeq" id="XP_003813418.1">
    <property type="nucleotide sequence ID" value="XM_003813370.5"/>
</dbReference>
<dbReference type="SMR" id="Q697L6"/>
<dbReference type="STRING" id="9597.ENSPPAP00000004675"/>
<dbReference type="GlyCosmos" id="Q697L6">
    <property type="glycosylation" value="1 site, No reported glycans"/>
</dbReference>
<dbReference type="Ensembl" id="ENSPPAT00000021403.1">
    <property type="protein sequence ID" value="ENSPPAP00000004675.1"/>
    <property type="gene ID" value="ENSPPAG00000019525.1"/>
</dbReference>
<dbReference type="GeneID" id="100992496"/>
<dbReference type="KEGG" id="pps:100992496"/>
<dbReference type="CTD" id="5726"/>
<dbReference type="eggNOG" id="ENOG502T15G">
    <property type="taxonomic scope" value="Eukaryota"/>
</dbReference>
<dbReference type="GeneTree" id="ENSGT01100000263477"/>
<dbReference type="OMA" id="TIIMLWM"/>
<dbReference type="Proteomes" id="UP000240080">
    <property type="component" value="Chromosome 7"/>
</dbReference>
<dbReference type="GO" id="GO:0005886">
    <property type="term" value="C:plasma membrane"/>
    <property type="evidence" value="ECO:0007669"/>
    <property type="project" value="Ensembl"/>
</dbReference>
<dbReference type="GO" id="GO:0033038">
    <property type="term" value="F:bitter taste receptor activity"/>
    <property type="evidence" value="ECO:0007669"/>
    <property type="project" value="Ensembl"/>
</dbReference>
<dbReference type="GO" id="GO:0004930">
    <property type="term" value="F:G protein-coupled receptor activity"/>
    <property type="evidence" value="ECO:0007669"/>
    <property type="project" value="UniProtKB-KW"/>
</dbReference>
<dbReference type="CDD" id="cd15025">
    <property type="entry name" value="7tm_TAS2R38"/>
    <property type="match status" value="1"/>
</dbReference>
<dbReference type="FunFam" id="1.20.1070.10:FF:000055">
    <property type="entry name" value="Taste receptor type 2"/>
    <property type="match status" value="1"/>
</dbReference>
<dbReference type="Gene3D" id="1.20.1070.10">
    <property type="entry name" value="Rhodopsin 7-helix transmembrane proteins"/>
    <property type="match status" value="1"/>
</dbReference>
<dbReference type="InterPro" id="IPR007960">
    <property type="entry name" value="TAS2R"/>
</dbReference>
<dbReference type="InterPro" id="IPR030050">
    <property type="entry name" value="TAS2R38"/>
</dbReference>
<dbReference type="PANTHER" id="PTHR11394">
    <property type="entry name" value="TASTE RECEPTOR TYPE 2"/>
    <property type="match status" value="1"/>
</dbReference>
<dbReference type="PANTHER" id="PTHR11394:SF52">
    <property type="entry name" value="TASTE RECEPTOR TYPE 2 MEMBER 38"/>
    <property type="match status" value="1"/>
</dbReference>
<dbReference type="Pfam" id="PF05296">
    <property type="entry name" value="TAS2R"/>
    <property type="match status" value="1"/>
</dbReference>
<dbReference type="SUPFAM" id="SSF81321">
    <property type="entry name" value="Family A G protein-coupled receptor-like"/>
    <property type="match status" value="1"/>
</dbReference>
<name>T2R38_PANPA</name>
<proteinExistence type="inferred from homology"/>
<keyword id="KW-0297">G-protein coupled receptor</keyword>
<keyword id="KW-0325">Glycoprotein</keyword>
<keyword id="KW-0472">Membrane</keyword>
<keyword id="KW-0675">Receptor</keyword>
<keyword id="KW-1185">Reference proteome</keyword>
<keyword id="KW-0716">Sensory transduction</keyword>
<keyword id="KW-0919">Taste</keyword>
<keyword id="KW-0807">Transducer</keyword>
<keyword id="KW-0812">Transmembrane</keyword>
<keyword id="KW-1133">Transmembrane helix</keyword>
<gene>
    <name type="primary">TAS2R38</name>
</gene>
<reference key="1">
    <citation type="submission" date="2004-03" db="EMBL/GenBank/DDBJ databases">
        <title>A global survey of haplotype frequencies for the TAS2R38 (PTC) gene.</title>
        <authorList>
            <person name="Davidson A.C."/>
            <person name="Pakstis A.J."/>
            <person name="Speed W.C."/>
            <person name="Odunsi A."/>
            <person name="Okonafua F."/>
            <person name="Kajuna S.L.J."/>
            <person name="Kungulilo S.V."/>
            <person name="Friedlaender J."/>
            <person name="Lu R.-B."/>
            <person name="Grigorenko E.L."/>
            <person name="Zhukova O.V."/>
            <person name="Schultz L.O."/>
            <person name="Bonne-Tamir B."/>
            <person name="Duffy V."/>
            <person name="Bartoshuk L."/>
            <person name="Kidd K.K."/>
            <person name="Kidd J.R."/>
        </authorList>
    </citation>
    <scope>NUCLEOTIDE SEQUENCE [GENOMIC DNA]</scope>
</reference>
<reference key="2">
    <citation type="journal article" date="2005" name="Mol. Biol. Evol.">
        <title>Evolution of bitter taste receptors in humans and apes.</title>
        <authorList>
            <person name="Fischer A."/>
            <person name="Gilad Y."/>
            <person name="Man O."/>
            <person name="Paeaebo S."/>
        </authorList>
    </citation>
    <scope>NUCLEOTIDE SEQUENCE [GENOMIC DNA]</scope>
</reference>
<reference key="3">
    <citation type="journal article" date="2004" name="Proc. Natl. Acad. Sci. U.S.A.">
        <title>Divergence of T2R chemosensory receptor families in humans, bonobos, and chimpanzees.</title>
        <authorList>
            <person name="Parry C.M."/>
            <person name="Erkner A."/>
            <person name="le Coutre J."/>
        </authorList>
    </citation>
    <scope>NUCLEOTIDE SEQUENCE [GENOMIC DNA]</scope>
</reference>